<organism>
    <name type="scientific">Mycobacterium sp. (strain MCS)</name>
    <dbReference type="NCBI Taxonomy" id="164756"/>
    <lineage>
        <taxon>Bacteria</taxon>
        <taxon>Bacillati</taxon>
        <taxon>Actinomycetota</taxon>
        <taxon>Actinomycetes</taxon>
        <taxon>Mycobacteriales</taxon>
        <taxon>Mycobacteriaceae</taxon>
        <taxon>Mycobacterium</taxon>
    </lineage>
</organism>
<comment type="function">
    <text evidence="1">Catalyzes the phosphorylation of pantothenate (Pan), the first step in CoA biosynthesis.</text>
</comment>
<comment type="catalytic activity">
    <reaction evidence="1">
        <text>(R)-pantothenate + ATP = (R)-4'-phosphopantothenate + ADP + H(+)</text>
        <dbReference type="Rhea" id="RHEA:16373"/>
        <dbReference type="ChEBI" id="CHEBI:10986"/>
        <dbReference type="ChEBI" id="CHEBI:15378"/>
        <dbReference type="ChEBI" id="CHEBI:29032"/>
        <dbReference type="ChEBI" id="CHEBI:30616"/>
        <dbReference type="ChEBI" id="CHEBI:456216"/>
        <dbReference type="EC" id="2.7.1.33"/>
    </reaction>
</comment>
<comment type="cofactor">
    <cofactor evidence="1">
        <name>NH4(+)</name>
        <dbReference type="ChEBI" id="CHEBI:28938"/>
    </cofactor>
    <cofactor evidence="1">
        <name>K(+)</name>
        <dbReference type="ChEBI" id="CHEBI:29103"/>
    </cofactor>
    <text evidence="1">A monovalent cation. Ammonium or potassium.</text>
</comment>
<comment type="pathway">
    <text evidence="1">Cofactor biosynthesis; coenzyme A biosynthesis; CoA from (R)-pantothenate: step 1/5.</text>
</comment>
<comment type="subunit">
    <text evidence="1">Homodimer.</text>
</comment>
<comment type="subcellular location">
    <subcellularLocation>
        <location evidence="1">Cytoplasm</location>
    </subcellularLocation>
</comment>
<comment type="similarity">
    <text evidence="1">Belongs to the type III pantothenate kinase family.</text>
</comment>
<protein>
    <recommendedName>
        <fullName evidence="1">Type III pantothenate kinase</fullName>
        <ecNumber evidence="1">2.7.1.33</ecNumber>
    </recommendedName>
    <alternativeName>
        <fullName evidence="1">PanK-III</fullName>
    </alternativeName>
    <alternativeName>
        <fullName evidence="1">Pantothenic acid kinase</fullName>
    </alternativeName>
</protein>
<reference key="1">
    <citation type="submission" date="2006-06" db="EMBL/GenBank/DDBJ databases">
        <title>Complete sequence of chromosome of Mycobacterium sp. MCS.</title>
        <authorList>
            <consortium name="US DOE Joint Genome Institute"/>
            <person name="Copeland A."/>
            <person name="Lucas S."/>
            <person name="Lapidus A."/>
            <person name="Barry K."/>
            <person name="Detter J.C."/>
            <person name="Glavina del Rio T."/>
            <person name="Hammon N."/>
            <person name="Israni S."/>
            <person name="Dalin E."/>
            <person name="Tice H."/>
            <person name="Pitluck S."/>
            <person name="Martinez M."/>
            <person name="Schmutz J."/>
            <person name="Larimer F."/>
            <person name="Land M."/>
            <person name="Hauser L."/>
            <person name="Kyrpides N."/>
            <person name="Kim E."/>
            <person name="Miller C.D."/>
            <person name="Hughes J.E."/>
            <person name="Anderson A.J."/>
            <person name="Sims R.C."/>
            <person name="Richardson P."/>
        </authorList>
    </citation>
    <scope>NUCLEOTIDE SEQUENCE [LARGE SCALE GENOMIC DNA]</scope>
    <source>
        <strain>MCS</strain>
    </source>
</reference>
<evidence type="ECO:0000255" key="1">
    <source>
        <dbReference type="HAMAP-Rule" id="MF_01274"/>
    </source>
</evidence>
<proteinExistence type="inferred from homology"/>
<gene>
    <name evidence="1" type="primary">coaX</name>
    <name type="ordered locus">Mmcs_4760</name>
</gene>
<feature type="chain" id="PRO_0000267565" description="Type III pantothenate kinase">
    <location>
        <begin position="1"/>
        <end position="267"/>
    </location>
</feature>
<feature type="active site" description="Proton acceptor" evidence="1">
    <location>
        <position position="111"/>
    </location>
</feature>
<feature type="binding site" evidence="1">
    <location>
        <begin position="6"/>
        <end position="13"/>
    </location>
    <ligand>
        <name>ATP</name>
        <dbReference type="ChEBI" id="CHEBI:30616"/>
    </ligand>
</feature>
<feature type="binding site" evidence="1">
    <location>
        <begin position="109"/>
        <end position="112"/>
    </location>
    <ligand>
        <name>substrate</name>
    </ligand>
</feature>
<feature type="binding site" evidence="1">
    <location>
        <position position="131"/>
    </location>
    <ligand>
        <name>K(+)</name>
        <dbReference type="ChEBI" id="CHEBI:29103"/>
    </ligand>
</feature>
<feature type="binding site" evidence="1">
    <location>
        <position position="134"/>
    </location>
    <ligand>
        <name>ATP</name>
        <dbReference type="ChEBI" id="CHEBI:30616"/>
    </ligand>
</feature>
<feature type="binding site" evidence="1">
    <location>
        <position position="186"/>
    </location>
    <ligand>
        <name>substrate</name>
    </ligand>
</feature>
<keyword id="KW-0067">ATP-binding</keyword>
<keyword id="KW-0173">Coenzyme A biosynthesis</keyword>
<keyword id="KW-0963">Cytoplasm</keyword>
<keyword id="KW-0418">Kinase</keyword>
<keyword id="KW-0479">Metal-binding</keyword>
<keyword id="KW-0547">Nucleotide-binding</keyword>
<keyword id="KW-0630">Potassium</keyword>
<keyword id="KW-0808">Transferase</keyword>
<sequence length="267" mass="28471">MLLAIDVRNTHTTVGLISGSGDHAKVVQQWRIRTESEATADELALTIDGLIGEDSERLTGAVGLSTVPSVLHEVRLMLEQYWPSVPHVMIEPGVRTGIPLLVDNPKEVGADRIVNCLAAYHRFGTAAIVVDFGSSICVDVVSAKGEFLGGAIAPGVQVSSDAAAARSAALRRVELTRPRSVIGKNTVECMQSGALFGFAGLVDGLVNRIREDVAGFSGTDVAVVATGHTAPLVLPDVHTVAHYDRHLTLDGLRLVFERNRDGQRGRR</sequence>
<name>COAX_MYCSS</name>
<accession>Q1B2M0</accession>
<dbReference type="EC" id="2.7.1.33" evidence="1"/>
<dbReference type="EMBL" id="CP000384">
    <property type="protein sequence ID" value="ABG10864.1"/>
    <property type="molecule type" value="Genomic_DNA"/>
</dbReference>
<dbReference type="SMR" id="Q1B2M0"/>
<dbReference type="KEGG" id="mmc:Mmcs_4760"/>
<dbReference type="HOGENOM" id="CLU_066627_1_0_11"/>
<dbReference type="BioCyc" id="MSP164756:G1G6O-4862-MONOMER"/>
<dbReference type="UniPathway" id="UPA00241">
    <property type="reaction ID" value="UER00352"/>
</dbReference>
<dbReference type="GO" id="GO:0005737">
    <property type="term" value="C:cytoplasm"/>
    <property type="evidence" value="ECO:0007669"/>
    <property type="project" value="UniProtKB-SubCell"/>
</dbReference>
<dbReference type="GO" id="GO:0005524">
    <property type="term" value="F:ATP binding"/>
    <property type="evidence" value="ECO:0007669"/>
    <property type="project" value="UniProtKB-UniRule"/>
</dbReference>
<dbReference type="GO" id="GO:0046872">
    <property type="term" value="F:metal ion binding"/>
    <property type="evidence" value="ECO:0007669"/>
    <property type="project" value="UniProtKB-KW"/>
</dbReference>
<dbReference type="GO" id="GO:0004594">
    <property type="term" value="F:pantothenate kinase activity"/>
    <property type="evidence" value="ECO:0007669"/>
    <property type="project" value="UniProtKB-UniRule"/>
</dbReference>
<dbReference type="GO" id="GO:0015937">
    <property type="term" value="P:coenzyme A biosynthetic process"/>
    <property type="evidence" value="ECO:0007669"/>
    <property type="project" value="UniProtKB-UniRule"/>
</dbReference>
<dbReference type="CDD" id="cd24015">
    <property type="entry name" value="ASKHA_NBD_PanK-III"/>
    <property type="match status" value="1"/>
</dbReference>
<dbReference type="Gene3D" id="3.30.420.40">
    <property type="match status" value="2"/>
</dbReference>
<dbReference type="HAMAP" id="MF_01274">
    <property type="entry name" value="Pantothen_kinase_3"/>
    <property type="match status" value="1"/>
</dbReference>
<dbReference type="InterPro" id="IPR043129">
    <property type="entry name" value="ATPase_NBD"/>
</dbReference>
<dbReference type="InterPro" id="IPR004619">
    <property type="entry name" value="Type_III_PanK"/>
</dbReference>
<dbReference type="NCBIfam" id="TIGR00671">
    <property type="entry name" value="baf"/>
    <property type="match status" value="1"/>
</dbReference>
<dbReference type="NCBIfam" id="NF009845">
    <property type="entry name" value="PRK13318.1-3"/>
    <property type="match status" value="1"/>
</dbReference>
<dbReference type="PANTHER" id="PTHR34265">
    <property type="entry name" value="TYPE III PANTOTHENATE KINASE"/>
    <property type="match status" value="1"/>
</dbReference>
<dbReference type="PANTHER" id="PTHR34265:SF1">
    <property type="entry name" value="TYPE III PANTOTHENATE KINASE"/>
    <property type="match status" value="1"/>
</dbReference>
<dbReference type="Pfam" id="PF03309">
    <property type="entry name" value="Pan_kinase"/>
    <property type="match status" value="1"/>
</dbReference>
<dbReference type="SUPFAM" id="SSF53067">
    <property type="entry name" value="Actin-like ATPase domain"/>
    <property type="match status" value="2"/>
</dbReference>